<gene>
    <name evidence="1" type="primary">aroC</name>
    <name type="ordered locus">STER_0691</name>
</gene>
<feature type="chain" id="PRO_1000022563" description="Chorismate synthase">
    <location>
        <begin position="1"/>
        <end position="388"/>
    </location>
</feature>
<feature type="binding site" evidence="1">
    <location>
        <position position="39"/>
    </location>
    <ligand>
        <name>NADP(+)</name>
        <dbReference type="ChEBI" id="CHEBI:58349"/>
    </ligand>
</feature>
<feature type="binding site" evidence="1">
    <location>
        <position position="45"/>
    </location>
    <ligand>
        <name>NADP(+)</name>
        <dbReference type="ChEBI" id="CHEBI:58349"/>
    </ligand>
</feature>
<feature type="binding site" evidence="1">
    <location>
        <begin position="130"/>
        <end position="132"/>
    </location>
    <ligand>
        <name>FMN</name>
        <dbReference type="ChEBI" id="CHEBI:58210"/>
    </ligand>
</feature>
<feature type="binding site" evidence="1">
    <location>
        <begin position="251"/>
        <end position="252"/>
    </location>
    <ligand>
        <name>FMN</name>
        <dbReference type="ChEBI" id="CHEBI:58210"/>
    </ligand>
</feature>
<feature type="binding site" evidence="1">
    <location>
        <position position="296"/>
    </location>
    <ligand>
        <name>FMN</name>
        <dbReference type="ChEBI" id="CHEBI:58210"/>
    </ligand>
</feature>
<feature type="binding site" evidence="1">
    <location>
        <begin position="311"/>
        <end position="315"/>
    </location>
    <ligand>
        <name>FMN</name>
        <dbReference type="ChEBI" id="CHEBI:58210"/>
    </ligand>
</feature>
<feature type="binding site" evidence="1">
    <location>
        <position position="337"/>
    </location>
    <ligand>
        <name>FMN</name>
        <dbReference type="ChEBI" id="CHEBI:58210"/>
    </ligand>
</feature>
<reference key="1">
    <citation type="journal article" date="2006" name="Proc. Natl. Acad. Sci. U.S.A.">
        <title>Comparative genomics of the lactic acid bacteria.</title>
        <authorList>
            <person name="Makarova K.S."/>
            <person name="Slesarev A."/>
            <person name="Wolf Y.I."/>
            <person name="Sorokin A."/>
            <person name="Mirkin B."/>
            <person name="Koonin E.V."/>
            <person name="Pavlov A."/>
            <person name="Pavlova N."/>
            <person name="Karamychev V."/>
            <person name="Polouchine N."/>
            <person name="Shakhova V."/>
            <person name="Grigoriev I."/>
            <person name="Lou Y."/>
            <person name="Rohksar D."/>
            <person name="Lucas S."/>
            <person name="Huang K."/>
            <person name="Goodstein D.M."/>
            <person name="Hawkins T."/>
            <person name="Plengvidhya V."/>
            <person name="Welker D."/>
            <person name="Hughes J."/>
            <person name="Goh Y."/>
            <person name="Benson A."/>
            <person name="Baldwin K."/>
            <person name="Lee J.-H."/>
            <person name="Diaz-Muniz I."/>
            <person name="Dosti B."/>
            <person name="Smeianov V."/>
            <person name="Wechter W."/>
            <person name="Barabote R."/>
            <person name="Lorca G."/>
            <person name="Altermann E."/>
            <person name="Barrangou R."/>
            <person name="Ganesan B."/>
            <person name="Xie Y."/>
            <person name="Rawsthorne H."/>
            <person name="Tamir D."/>
            <person name="Parker C."/>
            <person name="Breidt F."/>
            <person name="Broadbent J.R."/>
            <person name="Hutkins R."/>
            <person name="O'Sullivan D."/>
            <person name="Steele J."/>
            <person name="Unlu G."/>
            <person name="Saier M.H. Jr."/>
            <person name="Klaenhammer T."/>
            <person name="Richardson P."/>
            <person name="Kozyavkin S."/>
            <person name="Weimer B.C."/>
            <person name="Mills D.A."/>
        </authorList>
    </citation>
    <scope>NUCLEOTIDE SEQUENCE [LARGE SCALE GENOMIC DNA]</scope>
    <source>
        <strain>ATCC BAA-491 / LMD-9</strain>
    </source>
</reference>
<keyword id="KW-0028">Amino-acid biosynthesis</keyword>
<keyword id="KW-0057">Aromatic amino acid biosynthesis</keyword>
<keyword id="KW-0274">FAD</keyword>
<keyword id="KW-0285">Flavoprotein</keyword>
<keyword id="KW-0288">FMN</keyword>
<keyword id="KW-0456">Lyase</keyword>
<keyword id="KW-0521">NADP</keyword>
<protein>
    <recommendedName>
        <fullName evidence="1">Chorismate synthase</fullName>
        <shortName evidence="1">CS</shortName>
        <ecNumber evidence="1">4.2.3.5</ecNumber>
    </recommendedName>
    <alternativeName>
        <fullName evidence="1">5-enolpyruvylshikimate-3-phosphate phospholyase</fullName>
    </alternativeName>
</protein>
<comment type="function">
    <text evidence="1">Catalyzes the anti-1,4-elimination of the C-3 phosphate and the C-6 proR hydrogen from 5-enolpyruvylshikimate-3-phosphate (EPSP) to yield chorismate, which is the branch point compound that serves as the starting substrate for the three terminal pathways of aromatic amino acid biosynthesis. This reaction introduces a second double bond into the aromatic ring system.</text>
</comment>
<comment type="catalytic activity">
    <reaction evidence="1">
        <text>5-O-(1-carboxyvinyl)-3-phosphoshikimate = chorismate + phosphate</text>
        <dbReference type="Rhea" id="RHEA:21020"/>
        <dbReference type="ChEBI" id="CHEBI:29748"/>
        <dbReference type="ChEBI" id="CHEBI:43474"/>
        <dbReference type="ChEBI" id="CHEBI:57701"/>
        <dbReference type="EC" id="4.2.3.5"/>
    </reaction>
</comment>
<comment type="cofactor">
    <cofactor evidence="1">
        <name>FMNH2</name>
        <dbReference type="ChEBI" id="CHEBI:57618"/>
    </cofactor>
    <text evidence="1">Reduced FMN (FMNH(2)).</text>
</comment>
<comment type="pathway">
    <text evidence="1">Metabolic intermediate biosynthesis; chorismate biosynthesis; chorismate from D-erythrose 4-phosphate and phosphoenolpyruvate: step 7/7.</text>
</comment>
<comment type="subunit">
    <text evidence="1">Homotetramer.</text>
</comment>
<comment type="similarity">
    <text evidence="1">Belongs to the chorismate synthase family.</text>
</comment>
<evidence type="ECO:0000255" key="1">
    <source>
        <dbReference type="HAMAP-Rule" id="MF_00300"/>
    </source>
</evidence>
<name>AROC_STRTD</name>
<accession>Q03LH3</accession>
<organism>
    <name type="scientific">Streptococcus thermophilus (strain ATCC BAA-491 / LMD-9)</name>
    <dbReference type="NCBI Taxonomy" id="322159"/>
    <lineage>
        <taxon>Bacteria</taxon>
        <taxon>Bacillati</taxon>
        <taxon>Bacillota</taxon>
        <taxon>Bacilli</taxon>
        <taxon>Lactobacillales</taxon>
        <taxon>Streptococcaceae</taxon>
        <taxon>Streptococcus</taxon>
    </lineage>
</organism>
<dbReference type="EC" id="4.2.3.5" evidence="1"/>
<dbReference type="EMBL" id="CP000419">
    <property type="protein sequence ID" value="ABJ65949.1"/>
    <property type="molecule type" value="Genomic_DNA"/>
</dbReference>
<dbReference type="RefSeq" id="WP_011225712.1">
    <property type="nucleotide sequence ID" value="NZ_CP086001.1"/>
</dbReference>
<dbReference type="SMR" id="Q03LH3"/>
<dbReference type="GeneID" id="66898549"/>
<dbReference type="KEGG" id="ste:STER_0691"/>
<dbReference type="HOGENOM" id="CLU_034547_2_0_9"/>
<dbReference type="UniPathway" id="UPA00053">
    <property type="reaction ID" value="UER00090"/>
</dbReference>
<dbReference type="GO" id="GO:0005829">
    <property type="term" value="C:cytosol"/>
    <property type="evidence" value="ECO:0007669"/>
    <property type="project" value="TreeGrafter"/>
</dbReference>
<dbReference type="GO" id="GO:0004107">
    <property type="term" value="F:chorismate synthase activity"/>
    <property type="evidence" value="ECO:0007669"/>
    <property type="project" value="UniProtKB-UniRule"/>
</dbReference>
<dbReference type="GO" id="GO:0010181">
    <property type="term" value="F:FMN binding"/>
    <property type="evidence" value="ECO:0007669"/>
    <property type="project" value="TreeGrafter"/>
</dbReference>
<dbReference type="GO" id="GO:0008652">
    <property type="term" value="P:amino acid biosynthetic process"/>
    <property type="evidence" value="ECO:0007669"/>
    <property type="project" value="UniProtKB-KW"/>
</dbReference>
<dbReference type="GO" id="GO:0009073">
    <property type="term" value="P:aromatic amino acid family biosynthetic process"/>
    <property type="evidence" value="ECO:0007669"/>
    <property type="project" value="UniProtKB-KW"/>
</dbReference>
<dbReference type="GO" id="GO:0009423">
    <property type="term" value="P:chorismate biosynthetic process"/>
    <property type="evidence" value="ECO:0007669"/>
    <property type="project" value="UniProtKB-UniRule"/>
</dbReference>
<dbReference type="CDD" id="cd07304">
    <property type="entry name" value="Chorismate_synthase"/>
    <property type="match status" value="1"/>
</dbReference>
<dbReference type="FunFam" id="3.60.150.10:FF:000002">
    <property type="entry name" value="Chorismate synthase"/>
    <property type="match status" value="1"/>
</dbReference>
<dbReference type="Gene3D" id="3.60.150.10">
    <property type="entry name" value="Chorismate synthase AroC"/>
    <property type="match status" value="1"/>
</dbReference>
<dbReference type="HAMAP" id="MF_00300">
    <property type="entry name" value="Chorismate_synth"/>
    <property type="match status" value="1"/>
</dbReference>
<dbReference type="InterPro" id="IPR000453">
    <property type="entry name" value="Chorismate_synth"/>
</dbReference>
<dbReference type="InterPro" id="IPR035904">
    <property type="entry name" value="Chorismate_synth_AroC_sf"/>
</dbReference>
<dbReference type="InterPro" id="IPR020541">
    <property type="entry name" value="Chorismate_synthase_CS"/>
</dbReference>
<dbReference type="NCBIfam" id="TIGR00033">
    <property type="entry name" value="aroC"/>
    <property type="match status" value="1"/>
</dbReference>
<dbReference type="NCBIfam" id="NF003793">
    <property type="entry name" value="PRK05382.1"/>
    <property type="match status" value="1"/>
</dbReference>
<dbReference type="PANTHER" id="PTHR21085">
    <property type="entry name" value="CHORISMATE SYNTHASE"/>
    <property type="match status" value="1"/>
</dbReference>
<dbReference type="PANTHER" id="PTHR21085:SF0">
    <property type="entry name" value="CHORISMATE SYNTHASE"/>
    <property type="match status" value="1"/>
</dbReference>
<dbReference type="Pfam" id="PF01264">
    <property type="entry name" value="Chorismate_synt"/>
    <property type="match status" value="1"/>
</dbReference>
<dbReference type="PIRSF" id="PIRSF001456">
    <property type="entry name" value="Chorismate_synth"/>
    <property type="match status" value="1"/>
</dbReference>
<dbReference type="SUPFAM" id="SSF103263">
    <property type="entry name" value="Chorismate synthase, AroC"/>
    <property type="match status" value="1"/>
</dbReference>
<dbReference type="PROSITE" id="PS00787">
    <property type="entry name" value="CHORISMATE_SYNTHASE_1"/>
    <property type="match status" value="1"/>
</dbReference>
<dbReference type="PROSITE" id="PS00788">
    <property type="entry name" value="CHORISMATE_SYNTHASE_2"/>
    <property type="match status" value="1"/>
</dbReference>
<dbReference type="PROSITE" id="PS00789">
    <property type="entry name" value="CHORISMATE_SYNTHASE_3"/>
    <property type="match status" value="1"/>
</dbReference>
<sequence>MRYLTAGESHGPRLTAIIEGVPAGLPLTAEDINGDLKRRQGGYGRGGRMKIESDKVEITSGVRHGKTTGAPITLHVINKDHQKWLDIMAVEDIEDRLKTKRKITHPRPGHADLVGGMKYRFDDLRNSLERSSARETTMRVAVGAVAKRILAELDIEIANHVVVFGGKEIDVPENLTVAQIKELAQQSEISVVNQEREQEIKDYIDQIKKEGDTIGGVVETVVGGVPVGLGSYVQWDTKLDAKIAQAVVSINAFKGVEFGLGFKDGYLRGSQVMDEILWNEEDGYTRRTNNLGGFEGGMTNGQPIVVRGVMKPIPTLYKPLMSVDIETHEPYKATVERSDPTALPAAGVVMESVVATVVANEILDKFSSDNLEELKEAVAHHRDYVKNF</sequence>
<proteinExistence type="inferred from homology"/>